<name>AZIN1_PONAB</name>
<sequence>MKGFIDDVDYSVGLLDEGTNLGNVIDNYVYEHTLTGKNAFFVGDLGKIVKKHSQWQNVVAQIKPFYTVKCNSAPAVLEILAALGTGFACSSKNEMALVQELGVPPENIIYISPCKQVSQIKYAAKVGVNIMTCDNEIELKKIARNHPNAKVLLHIATEDNIGGEEGNMKFGTTLKNCRHLLECAKELDVQIIGVKFHVSSACKESQVYVHALSDARCVFDMAGEIGFTMNMLDIGGGFTGTEFQLEEVNHVISPLLDVYFPEGSGVKIISEPGSYYVSSAFTLAVNIIAKKVVENDKFPSGVEKTGSDEPAFMYYMNDGVYGSFASKLSEDLNTIPEVHKKYKEDEPLFTSSLWGPSCDELDQIVESCLLPELNVGDWLIFDNMGADSFHEPSAFNDFQRPAIYYMMSFSDWYEMQDAGITSDSMMKNFFFVPSCIQLSQEDSFSAEA</sequence>
<organism>
    <name type="scientific">Pongo abelii</name>
    <name type="common">Sumatran orangutan</name>
    <name type="synonym">Pongo pygmaeus abelii</name>
    <dbReference type="NCBI Taxonomy" id="9601"/>
    <lineage>
        <taxon>Eukaryota</taxon>
        <taxon>Metazoa</taxon>
        <taxon>Chordata</taxon>
        <taxon>Craniata</taxon>
        <taxon>Vertebrata</taxon>
        <taxon>Euteleostomi</taxon>
        <taxon>Mammalia</taxon>
        <taxon>Eutheria</taxon>
        <taxon>Euarchontoglires</taxon>
        <taxon>Primates</taxon>
        <taxon>Haplorrhini</taxon>
        <taxon>Catarrhini</taxon>
        <taxon>Hominidae</taxon>
        <taxon>Pongo</taxon>
    </lineage>
</organism>
<dbReference type="EMBL" id="CR860112">
    <property type="protein sequence ID" value="CAH92257.1"/>
    <property type="molecule type" value="mRNA"/>
</dbReference>
<dbReference type="RefSeq" id="NP_001126321.2">
    <property type="nucleotide sequence ID" value="NM_001132849.2"/>
</dbReference>
<dbReference type="SMR" id="Q5R7K3"/>
<dbReference type="FunCoup" id="Q5R7K3">
    <property type="interactions" value="2004"/>
</dbReference>
<dbReference type="GeneID" id="100173300"/>
<dbReference type="KEGG" id="pon:100173300"/>
<dbReference type="CTD" id="51582"/>
<dbReference type="InParanoid" id="Q5R7K3"/>
<dbReference type="OrthoDB" id="5034579at2759"/>
<dbReference type="Proteomes" id="UP000001595">
    <property type="component" value="Unplaced"/>
</dbReference>
<dbReference type="GO" id="GO:0005737">
    <property type="term" value="C:cytoplasm"/>
    <property type="evidence" value="ECO:0007669"/>
    <property type="project" value="TreeGrafter"/>
</dbReference>
<dbReference type="GO" id="GO:0005634">
    <property type="term" value="C:nucleus"/>
    <property type="evidence" value="ECO:0000250"/>
    <property type="project" value="UniProtKB"/>
</dbReference>
<dbReference type="GO" id="GO:0042978">
    <property type="term" value="F:ornithine decarboxylase activator activity"/>
    <property type="evidence" value="ECO:0000250"/>
    <property type="project" value="UniProtKB"/>
</dbReference>
<dbReference type="GO" id="GO:0004586">
    <property type="term" value="F:ornithine decarboxylase activity"/>
    <property type="evidence" value="ECO:0007669"/>
    <property type="project" value="TreeGrafter"/>
</dbReference>
<dbReference type="GO" id="GO:0042177">
    <property type="term" value="P:negative regulation of protein catabolic process"/>
    <property type="evidence" value="ECO:0000250"/>
    <property type="project" value="UniProtKB"/>
</dbReference>
<dbReference type="GO" id="GO:1902269">
    <property type="term" value="P:positive regulation of polyamine transmembrane transport"/>
    <property type="evidence" value="ECO:0007669"/>
    <property type="project" value="TreeGrafter"/>
</dbReference>
<dbReference type="GO" id="GO:0033387">
    <property type="term" value="P:putrescine biosynthetic process from arginine, via ornithine"/>
    <property type="evidence" value="ECO:0007669"/>
    <property type="project" value="TreeGrafter"/>
</dbReference>
<dbReference type="CDD" id="cd06831">
    <property type="entry name" value="PLPDE_III_ODC_like_AZI"/>
    <property type="match status" value="1"/>
</dbReference>
<dbReference type="FunFam" id="3.20.20.10:FF:000010">
    <property type="entry name" value="Antizyme inhibitor 1"/>
    <property type="match status" value="1"/>
</dbReference>
<dbReference type="FunFam" id="2.40.37.10:FF:000008">
    <property type="entry name" value="antizyme inhibitor 1"/>
    <property type="match status" value="1"/>
</dbReference>
<dbReference type="Gene3D" id="3.20.20.10">
    <property type="entry name" value="Alanine racemase"/>
    <property type="match status" value="1"/>
</dbReference>
<dbReference type="Gene3D" id="2.40.37.10">
    <property type="entry name" value="Lyase, Ornithine Decarboxylase, Chain A, domain 1"/>
    <property type="match status" value="1"/>
</dbReference>
<dbReference type="InterPro" id="IPR009006">
    <property type="entry name" value="Ala_racemase/Decarboxylase_C"/>
</dbReference>
<dbReference type="InterPro" id="IPR031178">
    <property type="entry name" value="Azin1"/>
</dbReference>
<dbReference type="InterPro" id="IPR022643">
    <property type="entry name" value="De-COase2_C"/>
</dbReference>
<dbReference type="InterPro" id="IPR022657">
    <property type="entry name" value="De-COase2_CS"/>
</dbReference>
<dbReference type="InterPro" id="IPR022644">
    <property type="entry name" value="De-COase2_N"/>
</dbReference>
<dbReference type="InterPro" id="IPR000183">
    <property type="entry name" value="Orn/DAP/Arg_de-COase"/>
</dbReference>
<dbReference type="InterPro" id="IPR002433">
    <property type="entry name" value="Orn_de-COase"/>
</dbReference>
<dbReference type="InterPro" id="IPR029066">
    <property type="entry name" value="PLP-binding_barrel"/>
</dbReference>
<dbReference type="PANTHER" id="PTHR11482:SF7">
    <property type="entry name" value="ANTIZYME INHIBITOR 1"/>
    <property type="match status" value="1"/>
</dbReference>
<dbReference type="PANTHER" id="PTHR11482">
    <property type="entry name" value="ARGININE/DIAMINOPIMELATE/ORNITHINE DECARBOXYLASE"/>
    <property type="match status" value="1"/>
</dbReference>
<dbReference type="Pfam" id="PF02784">
    <property type="entry name" value="Orn_Arg_deC_N"/>
    <property type="match status" value="1"/>
</dbReference>
<dbReference type="Pfam" id="PF00278">
    <property type="entry name" value="Orn_DAP_Arg_deC"/>
    <property type="match status" value="1"/>
</dbReference>
<dbReference type="PRINTS" id="PR01179">
    <property type="entry name" value="ODADCRBXLASE"/>
</dbReference>
<dbReference type="PRINTS" id="PR01182">
    <property type="entry name" value="ORNDCRBXLASE"/>
</dbReference>
<dbReference type="SUPFAM" id="SSF50621">
    <property type="entry name" value="Alanine racemase C-terminal domain-like"/>
    <property type="match status" value="1"/>
</dbReference>
<dbReference type="SUPFAM" id="SSF51419">
    <property type="entry name" value="PLP-binding barrel"/>
    <property type="match status" value="1"/>
</dbReference>
<dbReference type="PROSITE" id="PS00879">
    <property type="entry name" value="ODR_DC_2_2"/>
    <property type="match status" value="1"/>
</dbReference>
<feature type="chain" id="PRO_0000239256" description="Antizyme inhibitor 1">
    <location>
        <begin position="1"/>
        <end position="448"/>
    </location>
</feature>
<feature type="site" description="Not modified" evidence="3">
    <location>
        <position position="69"/>
    </location>
</feature>
<accession>Q5R7K3</accession>
<gene>
    <name type="primary">AZIN1</name>
</gene>
<evidence type="ECO:0000250" key="1"/>
<evidence type="ECO:0000250" key="2">
    <source>
        <dbReference type="UniProtKB" id="O14977"/>
    </source>
</evidence>
<evidence type="ECO:0000250" key="3">
    <source>
        <dbReference type="UniProtKB" id="O35484"/>
    </source>
</evidence>
<evidence type="ECO:0000305" key="4"/>
<reference key="1">
    <citation type="submission" date="2004-11" db="EMBL/GenBank/DDBJ databases">
        <authorList>
            <consortium name="The German cDNA consortium"/>
        </authorList>
    </citation>
    <scope>NUCLEOTIDE SEQUENCE [LARGE SCALE MRNA]</scope>
    <source>
        <tissue>Brain cortex</tissue>
    </source>
</reference>
<proteinExistence type="evidence at transcript level"/>
<protein>
    <recommendedName>
        <fullName>Antizyme inhibitor 1</fullName>
        <shortName>AZI</shortName>
    </recommendedName>
    <alternativeName>
        <fullName>Ornithine decarboxylase antizyme inhibitor</fullName>
    </alternativeName>
</protein>
<keyword id="KW-0539">Nucleus</keyword>
<keyword id="KW-0620">Polyamine biosynthesis</keyword>
<keyword id="KW-1185">Reference proteome</keyword>
<keyword id="KW-0832">Ubl conjugation</keyword>
<comment type="function">
    <text evidence="2 3">Antizyme inhibitor (AZI) protein that positively regulates ornithine decarboxylase (ODC) activity and polyamine uptake. AZI is an enzymatically inactive ODC homolog that counteracts the negative effect of ODC antizymes (AZs) OAZ1, OAZ2 and OAZ3 on ODC activity by competing with ODC for antizyme-binding. Inhibits antizyme-dependent ODC degradation and releases ODC monomers from their inactive complex with antizymes, leading to formation of the catalytically active ODC homodimer and restoring polyamine production.</text>
</comment>
<comment type="subunit">
    <text evidence="2 3">Monomer. Interacts with OAZ1 and OAZ3; this interaction disrupts the interaction between the antizyme and ODC1.</text>
</comment>
<comment type="subcellular location">
    <subcellularLocation>
        <location evidence="1">Nucleus</location>
    </subcellularLocation>
</comment>
<comment type="PTM">
    <text evidence="1">Ubiquitinated, leading to its proteasomal degradation; a process that is reduced in presence of antizyme OAZ1.</text>
</comment>
<comment type="similarity">
    <text evidence="4">Belongs to the Orn/Lys/Arg decarboxylase class-II family. ODC antizyme inhibitor subfamily.</text>
</comment>